<keyword id="KW-0067">ATP-binding</keyword>
<keyword id="KW-0315">Glutamine amidotransferase</keyword>
<keyword id="KW-0332">GMP biosynthesis</keyword>
<keyword id="KW-0436">Ligase</keyword>
<keyword id="KW-0547">Nucleotide-binding</keyword>
<keyword id="KW-0658">Purine biosynthesis</keyword>
<dbReference type="EC" id="6.3.5.2" evidence="1"/>
<dbReference type="EMBL" id="CP000937">
    <property type="protein sequence ID" value="ABZ87942.1"/>
    <property type="molecule type" value="Genomic_DNA"/>
</dbReference>
<dbReference type="SMR" id="B0U0B2"/>
<dbReference type="MEROPS" id="C26.957"/>
<dbReference type="KEGG" id="fph:Fphi_1717"/>
<dbReference type="eggNOG" id="COG0518">
    <property type="taxonomic scope" value="Bacteria"/>
</dbReference>
<dbReference type="eggNOG" id="COG0519">
    <property type="taxonomic scope" value="Bacteria"/>
</dbReference>
<dbReference type="HOGENOM" id="CLU_014340_0_5_6"/>
<dbReference type="UniPathway" id="UPA00189">
    <property type="reaction ID" value="UER00296"/>
</dbReference>
<dbReference type="GO" id="GO:0005829">
    <property type="term" value="C:cytosol"/>
    <property type="evidence" value="ECO:0007669"/>
    <property type="project" value="TreeGrafter"/>
</dbReference>
<dbReference type="GO" id="GO:0005524">
    <property type="term" value="F:ATP binding"/>
    <property type="evidence" value="ECO:0007669"/>
    <property type="project" value="UniProtKB-UniRule"/>
</dbReference>
<dbReference type="GO" id="GO:0003921">
    <property type="term" value="F:GMP synthase activity"/>
    <property type="evidence" value="ECO:0007669"/>
    <property type="project" value="InterPro"/>
</dbReference>
<dbReference type="CDD" id="cd01742">
    <property type="entry name" value="GATase1_GMP_Synthase"/>
    <property type="match status" value="1"/>
</dbReference>
<dbReference type="CDD" id="cd01997">
    <property type="entry name" value="GMP_synthase_C"/>
    <property type="match status" value="1"/>
</dbReference>
<dbReference type="FunFam" id="3.30.300.10:FF:000002">
    <property type="entry name" value="GMP synthase [glutamine-hydrolyzing]"/>
    <property type="match status" value="1"/>
</dbReference>
<dbReference type="FunFam" id="3.40.50.620:FF:000001">
    <property type="entry name" value="GMP synthase [glutamine-hydrolyzing]"/>
    <property type="match status" value="1"/>
</dbReference>
<dbReference type="FunFam" id="3.40.50.880:FF:000001">
    <property type="entry name" value="GMP synthase [glutamine-hydrolyzing]"/>
    <property type="match status" value="1"/>
</dbReference>
<dbReference type="Gene3D" id="3.30.300.10">
    <property type="match status" value="1"/>
</dbReference>
<dbReference type="Gene3D" id="3.40.50.880">
    <property type="match status" value="1"/>
</dbReference>
<dbReference type="Gene3D" id="3.40.50.620">
    <property type="entry name" value="HUPs"/>
    <property type="match status" value="1"/>
</dbReference>
<dbReference type="HAMAP" id="MF_00344">
    <property type="entry name" value="GMP_synthase"/>
    <property type="match status" value="1"/>
</dbReference>
<dbReference type="InterPro" id="IPR029062">
    <property type="entry name" value="Class_I_gatase-like"/>
</dbReference>
<dbReference type="InterPro" id="IPR017926">
    <property type="entry name" value="GATASE"/>
</dbReference>
<dbReference type="InterPro" id="IPR001674">
    <property type="entry name" value="GMP_synth_C"/>
</dbReference>
<dbReference type="InterPro" id="IPR004739">
    <property type="entry name" value="GMP_synth_GATase"/>
</dbReference>
<dbReference type="InterPro" id="IPR022955">
    <property type="entry name" value="GMP_synthase"/>
</dbReference>
<dbReference type="InterPro" id="IPR025777">
    <property type="entry name" value="GMPS_ATP_PPase_dom"/>
</dbReference>
<dbReference type="InterPro" id="IPR022310">
    <property type="entry name" value="NAD/GMP_synthase"/>
</dbReference>
<dbReference type="InterPro" id="IPR014729">
    <property type="entry name" value="Rossmann-like_a/b/a_fold"/>
</dbReference>
<dbReference type="NCBIfam" id="TIGR00884">
    <property type="entry name" value="guaA_Cterm"/>
    <property type="match status" value="1"/>
</dbReference>
<dbReference type="NCBIfam" id="TIGR00888">
    <property type="entry name" value="guaA_Nterm"/>
    <property type="match status" value="1"/>
</dbReference>
<dbReference type="NCBIfam" id="NF000848">
    <property type="entry name" value="PRK00074.1"/>
    <property type="match status" value="1"/>
</dbReference>
<dbReference type="PANTHER" id="PTHR11922:SF2">
    <property type="entry name" value="GMP SYNTHASE [GLUTAMINE-HYDROLYZING]"/>
    <property type="match status" value="1"/>
</dbReference>
<dbReference type="PANTHER" id="PTHR11922">
    <property type="entry name" value="GMP SYNTHASE-RELATED"/>
    <property type="match status" value="1"/>
</dbReference>
<dbReference type="Pfam" id="PF00117">
    <property type="entry name" value="GATase"/>
    <property type="match status" value="1"/>
</dbReference>
<dbReference type="Pfam" id="PF00958">
    <property type="entry name" value="GMP_synt_C"/>
    <property type="match status" value="1"/>
</dbReference>
<dbReference type="Pfam" id="PF02540">
    <property type="entry name" value="NAD_synthase"/>
    <property type="match status" value="1"/>
</dbReference>
<dbReference type="PRINTS" id="PR00097">
    <property type="entry name" value="ANTSNTHASEII"/>
</dbReference>
<dbReference type="PRINTS" id="PR00096">
    <property type="entry name" value="GATASE"/>
</dbReference>
<dbReference type="SUPFAM" id="SSF52402">
    <property type="entry name" value="Adenine nucleotide alpha hydrolases-like"/>
    <property type="match status" value="1"/>
</dbReference>
<dbReference type="SUPFAM" id="SSF52317">
    <property type="entry name" value="Class I glutamine amidotransferase-like"/>
    <property type="match status" value="1"/>
</dbReference>
<dbReference type="SUPFAM" id="SSF54810">
    <property type="entry name" value="GMP synthetase C-terminal dimerisation domain"/>
    <property type="match status" value="1"/>
</dbReference>
<dbReference type="PROSITE" id="PS51273">
    <property type="entry name" value="GATASE_TYPE_1"/>
    <property type="match status" value="1"/>
</dbReference>
<dbReference type="PROSITE" id="PS51553">
    <property type="entry name" value="GMPS_ATP_PPASE"/>
    <property type="match status" value="1"/>
</dbReference>
<feature type="chain" id="PRO_1000120299" description="GMP synthase [glutamine-hydrolyzing]">
    <location>
        <begin position="1"/>
        <end position="516"/>
    </location>
</feature>
<feature type="domain" description="Glutamine amidotransferase type-1" evidence="1">
    <location>
        <begin position="8"/>
        <end position="198"/>
    </location>
</feature>
<feature type="domain" description="GMPS ATP-PPase" evidence="1">
    <location>
        <begin position="199"/>
        <end position="391"/>
    </location>
</feature>
<feature type="active site" description="Nucleophile" evidence="1">
    <location>
        <position position="84"/>
    </location>
</feature>
<feature type="active site" evidence="1">
    <location>
        <position position="172"/>
    </location>
</feature>
<feature type="active site" evidence="1">
    <location>
        <position position="174"/>
    </location>
</feature>
<feature type="binding site" evidence="1">
    <location>
        <begin position="226"/>
        <end position="232"/>
    </location>
    <ligand>
        <name>ATP</name>
        <dbReference type="ChEBI" id="CHEBI:30616"/>
    </ligand>
</feature>
<proteinExistence type="inferred from homology"/>
<name>GUAA_FRAP2</name>
<sequence>MTDIHNHKILILDFGSQYTQLIARRVREVGVFCEIFPHDIADDFIKDYHAKGIILSGGPESVYDSDVKAPEIVFELGVPVLGICYGMQTMVMQHGGEVKGADQSEFGKAIVNILKSSENIFSNLKTEQSVWMSHSDKVTQTGEHFEVIASSTNAPVAAVAHKSKPFYGVQFHPETTHTENGKQIIENFALNICKCDALWNIENIIENDIKEIKKQVGSDRVILGLSGGVDSSVVAAILHEAIGDQLTCIFVDTGLLRLNEGDQVMEVFAEHMDINVIRVNAKNRFLDALKGIGDPEEKRKIIGKLFVDIFDEEAAKIENAKWLAQGTIYSDVIESAGNSQSKAHVIKSHHNVGGLPKEMKLKLLEPLRELFKDEVRKLGLGLGLPYNMLYRHPFPGPGLGVRILGEIKKEYVETLQKADAIFTEELYKHNLYHDISQAFGVFLPVKSVGVVGDQRRYEYVIALRAVVSIDFMTATWANLPYDFLSIVSNRIVNEVKQVSRVVYDVTGKPPGTIEWE</sequence>
<reference key="1">
    <citation type="submission" date="2007-12" db="EMBL/GenBank/DDBJ databases">
        <title>Complete sequence of chromosome of Francisella philomiragia subsp. philomiragia ATCC 25017.</title>
        <authorList>
            <consortium name="US DOE Joint Genome Institute"/>
            <person name="Copeland A."/>
            <person name="Lucas S."/>
            <person name="Lapidus A."/>
            <person name="Barry K."/>
            <person name="Detter J.C."/>
            <person name="Glavina del Rio T."/>
            <person name="Hammon N."/>
            <person name="Israni S."/>
            <person name="Dalin E."/>
            <person name="Tice H."/>
            <person name="Pitluck S."/>
            <person name="Chain P."/>
            <person name="Malfatti S."/>
            <person name="Shin M."/>
            <person name="Vergez L."/>
            <person name="Schmutz J."/>
            <person name="Larimer F."/>
            <person name="Land M."/>
            <person name="Hauser L."/>
            <person name="Richardson P."/>
        </authorList>
    </citation>
    <scope>NUCLEOTIDE SEQUENCE [LARGE SCALE GENOMIC DNA]</scope>
    <source>
        <strain>ATCC 25017 / CCUG 19701 / FSC 153 / O#319-036</strain>
    </source>
</reference>
<evidence type="ECO:0000255" key="1">
    <source>
        <dbReference type="HAMAP-Rule" id="MF_00344"/>
    </source>
</evidence>
<gene>
    <name evidence="1" type="primary">guaA</name>
    <name type="ordered locus">Fphi_1717</name>
</gene>
<accession>B0U0B2</accession>
<protein>
    <recommendedName>
        <fullName evidence="1">GMP synthase [glutamine-hydrolyzing]</fullName>
        <ecNumber evidence="1">6.3.5.2</ecNumber>
    </recommendedName>
    <alternativeName>
        <fullName evidence="1">GMP synthetase</fullName>
    </alternativeName>
    <alternativeName>
        <fullName evidence="1">Glutamine amidotransferase</fullName>
    </alternativeName>
</protein>
<organism>
    <name type="scientific">Francisella philomiragia subsp. philomiragia (strain ATCC 25017 / CCUG 19701 / FSC 153 / O#319-036)</name>
    <dbReference type="NCBI Taxonomy" id="484022"/>
    <lineage>
        <taxon>Bacteria</taxon>
        <taxon>Pseudomonadati</taxon>
        <taxon>Pseudomonadota</taxon>
        <taxon>Gammaproteobacteria</taxon>
        <taxon>Thiotrichales</taxon>
        <taxon>Francisellaceae</taxon>
        <taxon>Francisella</taxon>
    </lineage>
</organism>
<comment type="function">
    <text evidence="1">Catalyzes the synthesis of GMP from XMP.</text>
</comment>
<comment type="catalytic activity">
    <reaction evidence="1">
        <text>XMP + L-glutamine + ATP + H2O = GMP + L-glutamate + AMP + diphosphate + 2 H(+)</text>
        <dbReference type="Rhea" id="RHEA:11680"/>
        <dbReference type="ChEBI" id="CHEBI:15377"/>
        <dbReference type="ChEBI" id="CHEBI:15378"/>
        <dbReference type="ChEBI" id="CHEBI:29985"/>
        <dbReference type="ChEBI" id="CHEBI:30616"/>
        <dbReference type="ChEBI" id="CHEBI:33019"/>
        <dbReference type="ChEBI" id="CHEBI:57464"/>
        <dbReference type="ChEBI" id="CHEBI:58115"/>
        <dbReference type="ChEBI" id="CHEBI:58359"/>
        <dbReference type="ChEBI" id="CHEBI:456215"/>
        <dbReference type="EC" id="6.3.5.2"/>
    </reaction>
</comment>
<comment type="pathway">
    <text evidence="1">Purine metabolism; GMP biosynthesis; GMP from XMP (L-Gln route): step 1/1.</text>
</comment>
<comment type="subunit">
    <text evidence="1">Homodimer.</text>
</comment>